<comment type="function">
    <text evidence="1">Essential cell division protein. May link together the upstream cell division proteins, which are predominantly cytoplasmic, with the downstream cell division proteins, which are predominantly periplasmic.</text>
</comment>
<comment type="subunit">
    <text evidence="1">Part of a complex composed of FtsB, FtsL and FtsQ.</text>
</comment>
<comment type="subcellular location">
    <subcellularLocation>
        <location evidence="1">Cell inner membrane</location>
        <topology evidence="1">Single-pass type II membrane protein</topology>
    </subcellularLocation>
    <text evidence="1">Localizes to the division septum.</text>
</comment>
<comment type="similarity">
    <text evidence="1">Belongs to the FtsB family.</text>
</comment>
<keyword id="KW-0131">Cell cycle</keyword>
<keyword id="KW-0132">Cell division</keyword>
<keyword id="KW-0997">Cell inner membrane</keyword>
<keyword id="KW-1003">Cell membrane</keyword>
<keyword id="KW-0175">Coiled coil</keyword>
<keyword id="KW-0472">Membrane</keyword>
<keyword id="KW-0812">Transmembrane</keyword>
<keyword id="KW-1133">Transmembrane helix</keyword>
<proteinExistence type="inferred from homology"/>
<organism>
    <name type="scientific">Xanthomonas campestris pv. campestris (strain 8004)</name>
    <dbReference type="NCBI Taxonomy" id="314565"/>
    <lineage>
        <taxon>Bacteria</taxon>
        <taxon>Pseudomonadati</taxon>
        <taxon>Pseudomonadota</taxon>
        <taxon>Gammaproteobacteria</taxon>
        <taxon>Lysobacterales</taxon>
        <taxon>Lysobacteraceae</taxon>
        <taxon>Xanthomonas</taxon>
    </lineage>
</organism>
<evidence type="ECO:0000255" key="1">
    <source>
        <dbReference type="HAMAP-Rule" id="MF_00599"/>
    </source>
</evidence>
<evidence type="ECO:0000256" key="2">
    <source>
        <dbReference type="SAM" id="MobiDB-lite"/>
    </source>
</evidence>
<sequence>MRNWRWLLLVLAVLLAWLQYRFWFGPGNSGEVMMLEAQVAHQTRDNEGLRQRNQALAAEVKDLKDGEAAIEERARSELGMIKPGETFYRVVEDAPLLPPAAQEAAPPAQPPAASADPVDHP</sequence>
<protein>
    <recommendedName>
        <fullName evidence="1">Cell division protein FtsB</fullName>
    </recommendedName>
</protein>
<feature type="chain" id="PRO_1000025736" description="Cell division protein FtsB">
    <location>
        <begin position="1"/>
        <end position="121"/>
    </location>
</feature>
<feature type="topological domain" description="Cytoplasmic" evidence="1">
    <location>
        <begin position="1"/>
        <end position="6"/>
    </location>
</feature>
<feature type="transmembrane region" description="Helical" evidence="1">
    <location>
        <begin position="7"/>
        <end position="24"/>
    </location>
</feature>
<feature type="topological domain" description="Periplasmic" evidence="1">
    <location>
        <begin position="25"/>
        <end position="121"/>
    </location>
</feature>
<feature type="region of interest" description="Disordered" evidence="2">
    <location>
        <begin position="98"/>
        <end position="121"/>
    </location>
</feature>
<feature type="coiled-coil region" evidence="1">
    <location>
        <begin position="31"/>
        <end position="66"/>
    </location>
</feature>
<accession>Q4UTP3</accession>
<name>FTSB_XANC8</name>
<gene>
    <name evidence="1" type="primary">ftsB</name>
    <name type="ordered locus">XC_2530</name>
</gene>
<reference key="1">
    <citation type="journal article" date="2005" name="Genome Res.">
        <title>Comparative and functional genomic analyses of the pathogenicity of phytopathogen Xanthomonas campestris pv. campestris.</title>
        <authorList>
            <person name="Qian W."/>
            <person name="Jia Y."/>
            <person name="Ren S.-X."/>
            <person name="He Y.-Q."/>
            <person name="Feng J.-X."/>
            <person name="Lu L.-F."/>
            <person name="Sun Q."/>
            <person name="Ying G."/>
            <person name="Tang D.-J."/>
            <person name="Tang H."/>
            <person name="Wu W."/>
            <person name="Hao P."/>
            <person name="Wang L."/>
            <person name="Jiang B.-L."/>
            <person name="Zeng S."/>
            <person name="Gu W.-Y."/>
            <person name="Lu G."/>
            <person name="Rong L."/>
            <person name="Tian Y."/>
            <person name="Yao Z."/>
            <person name="Fu G."/>
            <person name="Chen B."/>
            <person name="Fang R."/>
            <person name="Qiang B."/>
            <person name="Chen Z."/>
            <person name="Zhao G.-P."/>
            <person name="Tang J.-L."/>
            <person name="He C."/>
        </authorList>
    </citation>
    <scope>NUCLEOTIDE SEQUENCE [LARGE SCALE GENOMIC DNA]</scope>
    <source>
        <strain>8004</strain>
    </source>
</reference>
<dbReference type="EMBL" id="CP000050">
    <property type="protein sequence ID" value="AAY49580.1"/>
    <property type="molecule type" value="Genomic_DNA"/>
</dbReference>
<dbReference type="RefSeq" id="WP_011036878.1">
    <property type="nucleotide sequence ID" value="NZ_CP155948.1"/>
</dbReference>
<dbReference type="SMR" id="Q4UTP3"/>
<dbReference type="KEGG" id="xcb:XC_2530"/>
<dbReference type="HOGENOM" id="CLU_134863_5_0_6"/>
<dbReference type="Proteomes" id="UP000000420">
    <property type="component" value="Chromosome"/>
</dbReference>
<dbReference type="GO" id="GO:0032153">
    <property type="term" value="C:cell division site"/>
    <property type="evidence" value="ECO:0007669"/>
    <property type="project" value="UniProtKB-UniRule"/>
</dbReference>
<dbReference type="GO" id="GO:0030428">
    <property type="term" value="C:cell septum"/>
    <property type="evidence" value="ECO:0007669"/>
    <property type="project" value="TreeGrafter"/>
</dbReference>
<dbReference type="GO" id="GO:0005886">
    <property type="term" value="C:plasma membrane"/>
    <property type="evidence" value="ECO:0007669"/>
    <property type="project" value="UniProtKB-SubCell"/>
</dbReference>
<dbReference type="GO" id="GO:0043093">
    <property type="term" value="P:FtsZ-dependent cytokinesis"/>
    <property type="evidence" value="ECO:0007669"/>
    <property type="project" value="UniProtKB-UniRule"/>
</dbReference>
<dbReference type="HAMAP" id="MF_00599">
    <property type="entry name" value="FtsB"/>
    <property type="match status" value="1"/>
</dbReference>
<dbReference type="InterPro" id="IPR023081">
    <property type="entry name" value="Cell_div_FtsB"/>
</dbReference>
<dbReference type="InterPro" id="IPR007060">
    <property type="entry name" value="FtsL/DivIC"/>
</dbReference>
<dbReference type="NCBIfam" id="NF002058">
    <property type="entry name" value="PRK00888.1"/>
    <property type="match status" value="1"/>
</dbReference>
<dbReference type="PANTHER" id="PTHR37485">
    <property type="entry name" value="CELL DIVISION PROTEIN FTSB"/>
    <property type="match status" value="1"/>
</dbReference>
<dbReference type="PANTHER" id="PTHR37485:SF1">
    <property type="entry name" value="CELL DIVISION PROTEIN FTSB"/>
    <property type="match status" value="1"/>
</dbReference>
<dbReference type="Pfam" id="PF04977">
    <property type="entry name" value="DivIC"/>
    <property type="match status" value="1"/>
</dbReference>